<comment type="function">
    <text evidence="1">Photosystem II (PSII) is a light-driven water:plastoquinone oxidoreductase that uses light energy to abstract electrons from H(2)O, generating O(2) and a proton gradient subsequently used for ATP formation. It consists of a core antenna complex that captures photons, and an electron transfer chain that converts photonic excitation into a charge separation. The D1/D2 (PsbA/PsbD) reaction center heterodimer binds P680, the primary electron donor of PSII as well as several subsequent electron acceptors.</text>
</comment>
<comment type="catalytic activity">
    <reaction evidence="1">
        <text>2 a plastoquinone + 4 hnu + 2 H2O = 2 a plastoquinol + O2</text>
        <dbReference type="Rhea" id="RHEA:36359"/>
        <dbReference type="Rhea" id="RHEA-COMP:9561"/>
        <dbReference type="Rhea" id="RHEA-COMP:9562"/>
        <dbReference type="ChEBI" id="CHEBI:15377"/>
        <dbReference type="ChEBI" id="CHEBI:15379"/>
        <dbReference type="ChEBI" id="CHEBI:17757"/>
        <dbReference type="ChEBI" id="CHEBI:30212"/>
        <dbReference type="ChEBI" id="CHEBI:62192"/>
        <dbReference type="EC" id="1.10.3.9"/>
    </reaction>
</comment>
<comment type="cofactor">
    <text evidence="1">The D1/D2 heterodimer binds P680, chlorophylls that are the primary electron donor of PSII, and subsequent electron acceptors. It shares a non-heme iron and each subunit binds pheophytin, quinone, additional chlorophylls, carotenoids and lipids. D1 provides most of the ligands for the Mn4-Ca-O5 cluster of the oxygen-evolving complex (OEC). There is also a Cl(-1) ion associated with D1 and D2, which is required for oxygen evolution. The PSII complex binds additional chlorophylls, carotenoids and specific lipids.</text>
</comment>
<comment type="subunit">
    <text evidence="1">PSII is composed of 1 copy each of membrane proteins PsbA, PsbB, PsbC, PsbD, PsbE, PsbF, PsbH, PsbI, PsbJ, PsbK, PsbL, PsbM, PsbT, PsbX, PsbY, PsbZ, Psb30/Ycf12, at least 3 peripheral proteins of the oxygen-evolving complex and a large number of cofactors. It forms dimeric complexes.</text>
</comment>
<comment type="subcellular location">
    <subcellularLocation>
        <location evidence="1">Plastid</location>
        <location evidence="1">Chloroplast thylakoid membrane</location>
        <topology evidence="1">Multi-pass membrane protein</topology>
    </subcellularLocation>
</comment>
<comment type="PTM">
    <text evidence="1">Tyr-161 forms a radical intermediate that is referred to as redox-active TyrZ, YZ or Y-Z.</text>
</comment>
<comment type="PTM">
    <text evidence="1">C-terminally processed by CTPA; processing is essential to allow assembly of the oxygen-evolving complex and thus photosynthetic growth.</text>
</comment>
<comment type="miscellaneous">
    <text evidence="1">2 of the reaction center chlorophylls (ChlD1 and ChlD2) are entirely coordinated by water.</text>
</comment>
<comment type="miscellaneous">
    <text evidence="1">Herbicides such as atrazine, BNT, diuron or ioxynil bind in the Q(B) binding site and block subsequent electron transfer.</text>
</comment>
<comment type="similarity">
    <text evidence="1">Belongs to the reaction center PufL/M/PsbA/D family.</text>
</comment>
<organism>
    <name type="scientific">Gossypium hirsutum</name>
    <name type="common">Upland cotton</name>
    <name type="synonym">Gossypium mexicanum</name>
    <dbReference type="NCBI Taxonomy" id="3635"/>
    <lineage>
        <taxon>Eukaryota</taxon>
        <taxon>Viridiplantae</taxon>
        <taxon>Streptophyta</taxon>
        <taxon>Embryophyta</taxon>
        <taxon>Tracheophyta</taxon>
        <taxon>Spermatophyta</taxon>
        <taxon>Magnoliopsida</taxon>
        <taxon>eudicotyledons</taxon>
        <taxon>Gunneridae</taxon>
        <taxon>Pentapetalae</taxon>
        <taxon>rosids</taxon>
        <taxon>malvids</taxon>
        <taxon>Malvales</taxon>
        <taxon>Malvaceae</taxon>
        <taxon>Malvoideae</taxon>
        <taxon>Gossypium</taxon>
    </lineage>
</organism>
<proteinExistence type="inferred from homology"/>
<reference key="1">
    <citation type="journal article" date="1990" name="Nucleic Acids Res.">
        <title>Nucleotide sequences of the chloroplast psbA and trnH genes from cotton Gossypium hirsutum.</title>
        <authorList>
            <person name="Ulmasov T.N."/>
            <person name="Gulov M.K."/>
            <person name="Aliev K.A."/>
            <person name="Andrianov V.M."/>
            <person name="Piruzian E.S."/>
        </authorList>
    </citation>
    <scope>NUCLEOTIDE SEQUENCE [GENOMIC DNA]</scope>
    <source>
        <strain>cv. 108-F</strain>
    </source>
</reference>
<reference key="2">
    <citation type="journal article" date="2006" name="BMC Genomics">
        <title>The complete chloroplast genome sequence of Gossypium hirsutum: organization and phylogenetic relationships to other angiosperms.</title>
        <authorList>
            <person name="Lee S.-B."/>
            <person name="Kaittanis C."/>
            <person name="Jansen R.K."/>
            <person name="Hostetler J.B."/>
            <person name="Tallon L.J."/>
            <person name="Town C.D."/>
            <person name="Daniell H."/>
        </authorList>
    </citation>
    <scope>NUCLEOTIDE SEQUENCE [LARGE SCALE GENOMIC DNA]</scope>
    <source>
        <strain>cv. Coker 310FR</strain>
    </source>
</reference>
<protein>
    <recommendedName>
        <fullName evidence="1">Photosystem II protein D1</fullName>
        <shortName evidence="1">PSII D1 protein</shortName>
        <ecNumber evidence="1">1.10.3.9</ecNumber>
    </recommendedName>
    <alternativeName>
        <fullName evidence="1">Photosystem II Q(B) protein</fullName>
    </alternativeName>
</protein>
<feature type="initiator methionine" description="Removed" evidence="1">
    <location>
        <position position="1"/>
    </location>
</feature>
<feature type="chain" id="PRO_0000090442" description="Photosystem II protein D1" evidence="1">
    <location>
        <begin position="2"/>
        <end position="344"/>
    </location>
</feature>
<feature type="propeptide" id="PRO_0000316455" evidence="1">
    <location>
        <begin position="345"/>
        <end position="353"/>
    </location>
</feature>
<feature type="transmembrane region" description="Helical" evidence="1">
    <location>
        <begin position="29"/>
        <end position="46"/>
    </location>
</feature>
<feature type="transmembrane region" description="Helical" evidence="1">
    <location>
        <begin position="118"/>
        <end position="133"/>
    </location>
</feature>
<feature type="transmembrane region" description="Helical" evidence="1">
    <location>
        <begin position="142"/>
        <end position="156"/>
    </location>
</feature>
<feature type="transmembrane region" description="Helical" evidence="1">
    <location>
        <begin position="197"/>
        <end position="218"/>
    </location>
</feature>
<feature type="transmembrane region" description="Helical" evidence="1">
    <location>
        <begin position="274"/>
        <end position="288"/>
    </location>
</feature>
<feature type="binding site" description="axial binding residue" evidence="1">
    <location>
        <position position="118"/>
    </location>
    <ligand>
        <name>chlorophyll a</name>
        <dbReference type="ChEBI" id="CHEBI:58416"/>
        <label>ChlzD1</label>
    </ligand>
    <ligandPart>
        <name>Mg</name>
        <dbReference type="ChEBI" id="CHEBI:25107"/>
    </ligandPart>
</feature>
<feature type="binding site" evidence="1">
    <location>
        <position position="126"/>
    </location>
    <ligand>
        <name>pheophytin a</name>
        <dbReference type="ChEBI" id="CHEBI:136840"/>
        <label>D1</label>
    </ligand>
</feature>
<feature type="binding site" evidence="1">
    <location>
        <position position="170"/>
    </location>
    <ligand>
        <name>[CaMn4O5] cluster</name>
        <dbReference type="ChEBI" id="CHEBI:189552"/>
    </ligand>
</feature>
<feature type="binding site" evidence="1">
    <location>
        <position position="189"/>
    </location>
    <ligand>
        <name>[CaMn4O5] cluster</name>
        <dbReference type="ChEBI" id="CHEBI:189552"/>
    </ligand>
</feature>
<feature type="binding site" description="axial binding residue" evidence="1">
    <location>
        <position position="198"/>
    </location>
    <ligand>
        <name>chlorophyll a</name>
        <dbReference type="ChEBI" id="CHEBI:58416"/>
        <label>PD1</label>
    </ligand>
    <ligandPart>
        <name>Mg</name>
        <dbReference type="ChEBI" id="CHEBI:25107"/>
    </ligandPart>
</feature>
<feature type="binding site" evidence="1">
    <location>
        <position position="215"/>
    </location>
    <ligand>
        <name>a quinone</name>
        <dbReference type="ChEBI" id="CHEBI:132124"/>
        <label>B</label>
    </ligand>
</feature>
<feature type="binding site" evidence="1">
    <location>
        <position position="215"/>
    </location>
    <ligand>
        <name>Fe cation</name>
        <dbReference type="ChEBI" id="CHEBI:24875"/>
        <note>ligand shared with heterodimeric partner</note>
    </ligand>
</feature>
<feature type="binding site" evidence="1">
    <location>
        <begin position="264"/>
        <end position="265"/>
    </location>
    <ligand>
        <name>a quinone</name>
        <dbReference type="ChEBI" id="CHEBI:132124"/>
        <label>B</label>
    </ligand>
</feature>
<feature type="binding site" evidence="1">
    <location>
        <position position="272"/>
    </location>
    <ligand>
        <name>Fe cation</name>
        <dbReference type="ChEBI" id="CHEBI:24875"/>
        <note>ligand shared with heterodimeric partner</note>
    </ligand>
</feature>
<feature type="binding site" evidence="1">
    <location>
        <position position="332"/>
    </location>
    <ligand>
        <name>[CaMn4O5] cluster</name>
        <dbReference type="ChEBI" id="CHEBI:189552"/>
    </ligand>
</feature>
<feature type="binding site" evidence="1">
    <location>
        <position position="333"/>
    </location>
    <ligand>
        <name>[CaMn4O5] cluster</name>
        <dbReference type="ChEBI" id="CHEBI:189552"/>
    </ligand>
</feature>
<feature type="binding site" evidence="1">
    <location>
        <position position="342"/>
    </location>
    <ligand>
        <name>[CaMn4O5] cluster</name>
        <dbReference type="ChEBI" id="CHEBI:189552"/>
    </ligand>
</feature>
<feature type="binding site" evidence="1">
    <location>
        <position position="344"/>
    </location>
    <ligand>
        <name>[CaMn4O5] cluster</name>
        <dbReference type="ChEBI" id="CHEBI:189552"/>
    </ligand>
</feature>
<feature type="site" description="Tyrosine radical intermediate" evidence="1">
    <location>
        <position position="161"/>
    </location>
</feature>
<feature type="site" description="Stabilizes free radical intermediate" evidence="1">
    <location>
        <position position="190"/>
    </location>
</feature>
<feature type="site" description="Cleavage; by CTPA" evidence="1">
    <location>
        <begin position="344"/>
        <end position="345"/>
    </location>
</feature>
<feature type="modified residue" description="N-acetylthreonine" evidence="1">
    <location>
        <position position="2"/>
    </location>
</feature>
<feature type="modified residue" description="Phosphothreonine" evidence="1">
    <location>
        <position position="2"/>
    </location>
</feature>
<geneLocation type="chloroplast"/>
<name>PSBA_GOSHI</name>
<sequence length="353" mass="38951">MTAILERRESESLWGRFCNWITSTENRLYIGWFGVLMIPTLLTATSVFIIAFIAAPPVDIDGIREPVSGSLLYGNNIISGAIIPTSAAIGLHFYPIWEAASVDEWLYNGGPYELIVLHFLLGVACYMGREWELSFRLGMRPWIAVAYSAPVAAATAVFLIYPIGQGSFSDGMPLGISGTFNFMIVFQAEHNILMHPFHMLGVAGVFGGSLFSAMHGSLVTSSLIRETTENESANEGYRFGQEEETYNIVAAHGYFGRLIFQYASFNNSRSLHFFLAAWPVVGIWFTALGISTMAFNLNGFNFNQSVVDSQGRVINTWADIINRANLGMEVMHERNAHNFPLDLAAIEAPSTNG</sequence>
<accession>P69564</accession>
<accession>P02955</accession>
<accession>Q2L8Y4</accession>
<keyword id="KW-0007">Acetylation</keyword>
<keyword id="KW-0106">Calcium</keyword>
<keyword id="KW-0148">Chlorophyll</keyword>
<keyword id="KW-0150">Chloroplast</keyword>
<keyword id="KW-0157">Chromophore</keyword>
<keyword id="KW-0249">Electron transport</keyword>
<keyword id="KW-0359">Herbicide resistance</keyword>
<keyword id="KW-0408">Iron</keyword>
<keyword id="KW-0460">Magnesium</keyword>
<keyword id="KW-0464">Manganese</keyword>
<keyword id="KW-0472">Membrane</keyword>
<keyword id="KW-0479">Metal-binding</keyword>
<keyword id="KW-0560">Oxidoreductase</keyword>
<keyword id="KW-0597">Phosphoprotein</keyword>
<keyword id="KW-0602">Photosynthesis</keyword>
<keyword id="KW-0604">Photosystem II</keyword>
<keyword id="KW-0934">Plastid</keyword>
<keyword id="KW-1185">Reference proteome</keyword>
<keyword id="KW-0793">Thylakoid</keyword>
<keyword id="KW-0812">Transmembrane</keyword>
<keyword id="KW-1133">Transmembrane helix</keyword>
<keyword id="KW-0813">Transport</keyword>
<evidence type="ECO:0000255" key="1">
    <source>
        <dbReference type="HAMAP-Rule" id="MF_01379"/>
    </source>
</evidence>
<gene>
    <name evidence="1" type="primary">psbA</name>
</gene>
<dbReference type="EC" id="1.10.3.9" evidence="1"/>
<dbReference type="EMBL" id="X15885">
    <property type="protein sequence ID" value="CAA33895.1"/>
    <property type="molecule type" value="Genomic_DNA"/>
</dbReference>
<dbReference type="EMBL" id="DQ345959">
    <property type="protein sequence ID" value="ABC73608.1"/>
    <property type="molecule type" value="Genomic_DNA"/>
</dbReference>
<dbReference type="PIR" id="S07583">
    <property type="entry name" value="F2CN1U"/>
</dbReference>
<dbReference type="RefSeq" id="YP_538915.1">
    <property type="nucleotide sequence ID" value="NC_007944.1"/>
</dbReference>
<dbReference type="SMR" id="P69564"/>
<dbReference type="GeneID" id="3989229"/>
<dbReference type="KEGG" id="ghi:3989229"/>
<dbReference type="OrthoDB" id="14146at41938"/>
<dbReference type="Proteomes" id="UP000189702">
    <property type="component" value="Chloroplast Pltd"/>
</dbReference>
<dbReference type="GO" id="GO:0009535">
    <property type="term" value="C:chloroplast thylakoid membrane"/>
    <property type="evidence" value="ECO:0007669"/>
    <property type="project" value="UniProtKB-SubCell"/>
</dbReference>
<dbReference type="GO" id="GO:0009523">
    <property type="term" value="C:photosystem II"/>
    <property type="evidence" value="ECO:0000318"/>
    <property type="project" value="GO_Central"/>
</dbReference>
<dbReference type="GO" id="GO:0016168">
    <property type="term" value="F:chlorophyll binding"/>
    <property type="evidence" value="ECO:0007669"/>
    <property type="project" value="UniProtKB-UniRule"/>
</dbReference>
<dbReference type="GO" id="GO:0045156">
    <property type="term" value="F:electron transporter, transferring electrons within the cyclic electron transport pathway of photosynthesis activity"/>
    <property type="evidence" value="ECO:0007669"/>
    <property type="project" value="InterPro"/>
</dbReference>
<dbReference type="GO" id="GO:0005506">
    <property type="term" value="F:iron ion binding"/>
    <property type="evidence" value="ECO:0007669"/>
    <property type="project" value="UniProtKB-UniRule"/>
</dbReference>
<dbReference type="GO" id="GO:0016682">
    <property type="term" value="F:oxidoreductase activity, acting on diphenols and related substances as donors, oxygen as acceptor"/>
    <property type="evidence" value="ECO:0007669"/>
    <property type="project" value="UniProtKB-UniRule"/>
</dbReference>
<dbReference type="GO" id="GO:0010242">
    <property type="term" value="F:oxygen evolving activity"/>
    <property type="evidence" value="ECO:0007669"/>
    <property type="project" value="UniProtKB-EC"/>
</dbReference>
<dbReference type="GO" id="GO:0009772">
    <property type="term" value="P:photosynthetic electron transport in photosystem II"/>
    <property type="evidence" value="ECO:0007669"/>
    <property type="project" value="InterPro"/>
</dbReference>
<dbReference type="GO" id="GO:0009635">
    <property type="term" value="P:response to herbicide"/>
    <property type="evidence" value="ECO:0007669"/>
    <property type="project" value="UniProtKB-KW"/>
</dbReference>
<dbReference type="CDD" id="cd09289">
    <property type="entry name" value="Photosystem-II_D1"/>
    <property type="match status" value="1"/>
</dbReference>
<dbReference type="FunFam" id="1.20.85.10:FF:000002">
    <property type="entry name" value="Photosystem II protein D1"/>
    <property type="match status" value="1"/>
</dbReference>
<dbReference type="Gene3D" id="1.20.85.10">
    <property type="entry name" value="Photosystem II protein D1-like"/>
    <property type="match status" value="1"/>
</dbReference>
<dbReference type="HAMAP" id="MF_01379">
    <property type="entry name" value="PSII_PsbA_D1"/>
    <property type="match status" value="1"/>
</dbReference>
<dbReference type="InterPro" id="IPR055266">
    <property type="entry name" value="D1/D2"/>
</dbReference>
<dbReference type="InterPro" id="IPR036854">
    <property type="entry name" value="Photo_II_D1/D2_sf"/>
</dbReference>
<dbReference type="InterPro" id="IPR000484">
    <property type="entry name" value="Photo_RC_L/M"/>
</dbReference>
<dbReference type="InterPro" id="IPR055265">
    <property type="entry name" value="Photo_RC_L/M_CS"/>
</dbReference>
<dbReference type="InterPro" id="IPR005867">
    <property type="entry name" value="PSII_D1"/>
</dbReference>
<dbReference type="NCBIfam" id="TIGR01151">
    <property type="entry name" value="psbA"/>
    <property type="match status" value="1"/>
</dbReference>
<dbReference type="PANTHER" id="PTHR33149:SF12">
    <property type="entry name" value="PHOTOSYSTEM II D2 PROTEIN"/>
    <property type="match status" value="1"/>
</dbReference>
<dbReference type="PANTHER" id="PTHR33149">
    <property type="entry name" value="PHOTOSYSTEM II PROTEIN D1"/>
    <property type="match status" value="1"/>
</dbReference>
<dbReference type="Pfam" id="PF00124">
    <property type="entry name" value="Photo_RC"/>
    <property type="match status" value="1"/>
</dbReference>
<dbReference type="PRINTS" id="PR00256">
    <property type="entry name" value="REACTNCENTRE"/>
</dbReference>
<dbReference type="SUPFAM" id="SSF81483">
    <property type="entry name" value="Bacterial photosystem II reaction centre, L and M subunits"/>
    <property type="match status" value="1"/>
</dbReference>
<dbReference type="PROSITE" id="PS00244">
    <property type="entry name" value="REACTION_CENTER"/>
    <property type="match status" value="1"/>
</dbReference>